<feature type="chain" id="PRO_0000092258" description="Sulfate/thiosulfate import ATP-binding protein CysA">
    <location>
        <begin position="1"/>
        <end position="359"/>
    </location>
</feature>
<feature type="domain" description="ABC transporter" evidence="1">
    <location>
        <begin position="3"/>
        <end position="237"/>
    </location>
</feature>
<feature type="binding site" evidence="1">
    <location>
        <begin position="35"/>
        <end position="42"/>
    </location>
    <ligand>
        <name>ATP</name>
        <dbReference type="ChEBI" id="CHEBI:30616"/>
    </ligand>
</feature>
<comment type="function">
    <text evidence="1">Part of the ABC transporter complex CysAWTP involved in sulfate/thiosulfate import. Responsible for energy coupling to the transport system.</text>
</comment>
<comment type="catalytic activity">
    <reaction evidence="1">
        <text>sulfate(out) + ATP + H2O = sulfate(in) + ADP + phosphate + H(+)</text>
        <dbReference type="Rhea" id="RHEA:10192"/>
        <dbReference type="ChEBI" id="CHEBI:15377"/>
        <dbReference type="ChEBI" id="CHEBI:15378"/>
        <dbReference type="ChEBI" id="CHEBI:16189"/>
        <dbReference type="ChEBI" id="CHEBI:30616"/>
        <dbReference type="ChEBI" id="CHEBI:43474"/>
        <dbReference type="ChEBI" id="CHEBI:456216"/>
        <dbReference type="EC" id="7.3.2.3"/>
    </reaction>
</comment>
<comment type="catalytic activity">
    <reaction evidence="1">
        <text>thiosulfate(out) + ATP + H2O = thiosulfate(in) + ADP + phosphate + H(+)</text>
        <dbReference type="Rhea" id="RHEA:29871"/>
        <dbReference type="ChEBI" id="CHEBI:15377"/>
        <dbReference type="ChEBI" id="CHEBI:15378"/>
        <dbReference type="ChEBI" id="CHEBI:30616"/>
        <dbReference type="ChEBI" id="CHEBI:33542"/>
        <dbReference type="ChEBI" id="CHEBI:43474"/>
        <dbReference type="ChEBI" id="CHEBI:456216"/>
        <dbReference type="EC" id="7.3.2.3"/>
    </reaction>
</comment>
<comment type="subunit">
    <text evidence="1">The complex is composed of two ATP-binding proteins (CysA), two transmembrane proteins (CysT and CysW) and a solute-binding protein (CysP).</text>
</comment>
<comment type="subcellular location">
    <subcellularLocation>
        <location evidence="1">Cell inner membrane</location>
        <topology evidence="1">Peripheral membrane protein</topology>
    </subcellularLocation>
</comment>
<comment type="similarity">
    <text evidence="1">Belongs to the ABC transporter superfamily. Sulfate/tungstate importer (TC 3.A.1.6) family.</text>
</comment>
<dbReference type="EC" id="7.3.2.3" evidence="1"/>
<dbReference type="EMBL" id="AE014291">
    <property type="protein sequence ID" value="AAN29066.1"/>
    <property type="molecule type" value="Genomic_DNA"/>
</dbReference>
<dbReference type="EMBL" id="CP002997">
    <property type="protein sequence ID" value="AEM17478.1"/>
    <property type="molecule type" value="Genomic_DNA"/>
</dbReference>
<dbReference type="RefSeq" id="WP_002965359.1">
    <property type="nucleotide sequence ID" value="NZ_KN046804.1"/>
</dbReference>
<dbReference type="SMR" id="P63354"/>
<dbReference type="KEGG" id="bms:BR0110"/>
<dbReference type="KEGG" id="bsi:BS1330_I0110"/>
<dbReference type="PATRIC" id="fig|204722.22.peg.1722"/>
<dbReference type="HOGENOM" id="CLU_000604_1_1_5"/>
<dbReference type="PhylomeDB" id="P63354"/>
<dbReference type="Proteomes" id="UP000007104">
    <property type="component" value="Chromosome I"/>
</dbReference>
<dbReference type="GO" id="GO:0043190">
    <property type="term" value="C:ATP-binding cassette (ABC) transporter complex"/>
    <property type="evidence" value="ECO:0007669"/>
    <property type="project" value="InterPro"/>
</dbReference>
<dbReference type="GO" id="GO:0015419">
    <property type="term" value="F:ABC-type sulfate transporter activity"/>
    <property type="evidence" value="ECO:0007669"/>
    <property type="project" value="InterPro"/>
</dbReference>
<dbReference type="GO" id="GO:0102025">
    <property type="term" value="F:ABC-type thiosulfate transporter activity"/>
    <property type="evidence" value="ECO:0007669"/>
    <property type="project" value="RHEA"/>
</dbReference>
<dbReference type="GO" id="GO:0005524">
    <property type="term" value="F:ATP binding"/>
    <property type="evidence" value="ECO:0007669"/>
    <property type="project" value="UniProtKB-KW"/>
</dbReference>
<dbReference type="GO" id="GO:0016887">
    <property type="term" value="F:ATP hydrolysis activity"/>
    <property type="evidence" value="ECO:0007669"/>
    <property type="project" value="InterPro"/>
</dbReference>
<dbReference type="CDD" id="cd03296">
    <property type="entry name" value="ABC_CysA_sulfate_importer"/>
    <property type="match status" value="1"/>
</dbReference>
<dbReference type="FunFam" id="3.40.50.300:FF:000425">
    <property type="entry name" value="Probable ABC transporter, ATP-binding subunit"/>
    <property type="match status" value="1"/>
</dbReference>
<dbReference type="Gene3D" id="3.40.50.300">
    <property type="entry name" value="P-loop containing nucleotide triphosphate hydrolases"/>
    <property type="match status" value="1"/>
</dbReference>
<dbReference type="InterPro" id="IPR003593">
    <property type="entry name" value="AAA+_ATPase"/>
</dbReference>
<dbReference type="InterPro" id="IPR050093">
    <property type="entry name" value="ABC_SmlMolc_Importer"/>
</dbReference>
<dbReference type="InterPro" id="IPR003439">
    <property type="entry name" value="ABC_transporter-like_ATP-bd"/>
</dbReference>
<dbReference type="InterPro" id="IPR017871">
    <property type="entry name" value="ABC_transporter-like_CS"/>
</dbReference>
<dbReference type="InterPro" id="IPR008995">
    <property type="entry name" value="Mo/tungstate-bd_C_term_dom"/>
</dbReference>
<dbReference type="InterPro" id="IPR027417">
    <property type="entry name" value="P-loop_NTPase"/>
</dbReference>
<dbReference type="InterPro" id="IPR005666">
    <property type="entry name" value="Sulph_transpt1"/>
</dbReference>
<dbReference type="InterPro" id="IPR024765">
    <property type="entry name" value="TOBE-like"/>
</dbReference>
<dbReference type="NCBIfam" id="TIGR00968">
    <property type="entry name" value="3a0106s01"/>
    <property type="match status" value="1"/>
</dbReference>
<dbReference type="PANTHER" id="PTHR42781">
    <property type="entry name" value="SPERMIDINE/PUTRESCINE IMPORT ATP-BINDING PROTEIN POTA"/>
    <property type="match status" value="1"/>
</dbReference>
<dbReference type="PANTHER" id="PTHR42781:SF4">
    <property type="entry name" value="SPERMIDINE_PUTRESCINE IMPORT ATP-BINDING PROTEIN POTA"/>
    <property type="match status" value="1"/>
</dbReference>
<dbReference type="Pfam" id="PF00005">
    <property type="entry name" value="ABC_tran"/>
    <property type="match status" value="1"/>
</dbReference>
<dbReference type="Pfam" id="PF12857">
    <property type="entry name" value="TOBE_3"/>
    <property type="match status" value="1"/>
</dbReference>
<dbReference type="SMART" id="SM00382">
    <property type="entry name" value="AAA"/>
    <property type="match status" value="1"/>
</dbReference>
<dbReference type="SUPFAM" id="SSF50331">
    <property type="entry name" value="MOP-like"/>
    <property type="match status" value="1"/>
</dbReference>
<dbReference type="SUPFAM" id="SSF52540">
    <property type="entry name" value="P-loop containing nucleoside triphosphate hydrolases"/>
    <property type="match status" value="1"/>
</dbReference>
<dbReference type="PROSITE" id="PS00211">
    <property type="entry name" value="ABC_TRANSPORTER_1"/>
    <property type="match status" value="1"/>
</dbReference>
<dbReference type="PROSITE" id="PS50893">
    <property type="entry name" value="ABC_TRANSPORTER_2"/>
    <property type="match status" value="1"/>
</dbReference>
<dbReference type="PROSITE" id="PS51237">
    <property type="entry name" value="CYSA"/>
    <property type="match status" value="1"/>
</dbReference>
<reference key="1">
    <citation type="journal article" date="2002" name="Proc. Natl. Acad. Sci. U.S.A.">
        <title>The Brucella suis genome reveals fundamental similarities between animal and plant pathogens and symbionts.</title>
        <authorList>
            <person name="Paulsen I.T."/>
            <person name="Seshadri R."/>
            <person name="Nelson K.E."/>
            <person name="Eisen J.A."/>
            <person name="Heidelberg J.F."/>
            <person name="Read T.D."/>
            <person name="Dodson R.J."/>
            <person name="Umayam L.A."/>
            <person name="Brinkac L.M."/>
            <person name="Beanan M.J."/>
            <person name="Daugherty S.C."/>
            <person name="DeBoy R.T."/>
            <person name="Durkin A.S."/>
            <person name="Kolonay J.F."/>
            <person name="Madupu R."/>
            <person name="Nelson W.C."/>
            <person name="Ayodeji B."/>
            <person name="Kraul M."/>
            <person name="Shetty J."/>
            <person name="Malek J.A."/>
            <person name="Van Aken S.E."/>
            <person name="Riedmuller S."/>
            <person name="Tettelin H."/>
            <person name="Gill S.R."/>
            <person name="White O."/>
            <person name="Salzberg S.L."/>
            <person name="Hoover D.L."/>
            <person name="Lindler L.E."/>
            <person name="Halling S.M."/>
            <person name="Boyle S.M."/>
            <person name="Fraser C.M."/>
        </authorList>
    </citation>
    <scope>NUCLEOTIDE SEQUENCE [LARGE SCALE GENOMIC DNA]</scope>
    <source>
        <strain>1330</strain>
    </source>
</reference>
<reference key="2">
    <citation type="journal article" date="2011" name="J. Bacteriol.">
        <title>Revised genome sequence of Brucella suis 1330.</title>
        <authorList>
            <person name="Tae H."/>
            <person name="Shallom S."/>
            <person name="Settlage R."/>
            <person name="Preston D."/>
            <person name="Adams L.G."/>
            <person name="Garner H.R."/>
        </authorList>
    </citation>
    <scope>NUCLEOTIDE SEQUENCE [LARGE SCALE GENOMIC DNA]</scope>
    <source>
        <strain>1330</strain>
    </source>
</reference>
<sequence>MEVRVAGVRKEFARFPALHNVSLTIQSGELIALLGPSGSGKTTLLRLIAGLETPTEGMIFFGDEDASQKSVQERNVGFVFQHYALFRHMTVADNIGFGLKVRPGGTRPSTAEIRRRALELLDLVQLSGLEKRYPAQLSGGQRQRVALARAMAIEPRVLLLDEPFGALDAQVRKELRRWLREIHDKTGHTTVFVTHDQDEALELADRVVVMSQGRIEQVGTPDEVYDKPNSPFVYGFIGESSTLPVRVENGEVWLADRNIGLGAENMPDGDAQLYFRPHDVELLDGCGGCIAGTVIASRRSGGKRRVELEVGGARERIEIEIPAEHPAAEKSRIAFRPRYWTLFRAGDSELPAPKAAATT</sequence>
<gene>
    <name evidence="1" type="primary">cysA</name>
    <name type="ordered locus">BR0110</name>
    <name type="ordered locus">BS1330_I0110</name>
</gene>
<evidence type="ECO:0000255" key="1">
    <source>
        <dbReference type="HAMAP-Rule" id="MF_01701"/>
    </source>
</evidence>
<accession>P63354</accession>
<accession>G0KB07</accession>
<accession>Q8G342</accession>
<accession>Q8YEP0</accession>
<name>CYSA_BRUSU</name>
<protein>
    <recommendedName>
        <fullName evidence="1">Sulfate/thiosulfate import ATP-binding protein CysA</fullName>
        <ecNumber evidence="1">7.3.2.3</ecNumber>
    </recommendedName>
    <alternativeName>
        <fullName evidence="1">Sulfate-transporting ATPase</fullName>
    </alternativeName>
</protein>
<proteinExistence type="inferred from homology"/>
<keyword id="KW-0067">ATP-binding</keyword>
<keyword id="KW-0997">Cell inner membrane</keyword>
<keyword id="KW-1003">Cell membrane</keyword>
<keyword id="KW-0472">Membrane</keyword>
<keyword id="KW-0547">Nucleotide-binding</keyword>
<keyword id="KW-0764">Sulfate transport</keyword>
<keyword id="KW-1278">Translocase</keyword>
<keyword id="KW-0813">Transport</keyword>
<organism>
    <name type="scientific">Brucella suis biovar 1 (strain 1330)</name>
    <dbReference type="NCBI Taxonomy" id="204722"/>
    <lineage>
        <taxon>Bacteria</taxon>
        <taxon>Pseudomonadati</taxon>
        <taxon>Pseudomonadota</taxon>
        <taxon>Alphaproteobacteria</taxon>
        <taxon>Hyphomicrobiales</taxon>
        <taxon>Brucellaceae</taxon>
        <taxon>Brucella/Ochrobactrum group</taxon>
        <taxon>Brucella</taxon>
    </lineage>
</organism>